<protein>
    <recommendedName>
        <fullName evidence="1">Small ribosomal subunit protein uS8</fullName>
    </recommendedName>
    <alternativeName>
        <fullName evidence="2">30S ribosomal protein S8</fullName>
    </alternativeName>
</protein>
<dbReference type="EMBL" id="CP001078">
    <property type="protein sequence ID" value="ACD51111.1"/>
    <property type="molecule type" value="Genomic_DNA"/>
</dbReference>
<dbReference type="RefSeq" id="WP_003372441.1">
    <property type="nucleotide sequence ID" value="NC_010723.1"/>
</dbReference>
<dbReference type="SMR" id="B2UYC4"/>
<dbReference type="KEGG" id="cbt:CLH_0251"/>
<dbReference type="HOGENOM" id="CLU_098428_0_2_9"/>
<dbReference type="GO" id="GO:1990904">
    <property type="term" value="C:ribonucleoprotein complex"/>
    <property type="evidence" value="ECO:0007669"/>
    <property type="project" value="UniProtKB-KW"/>
</dbReference>
<dbReference type="GO" id="GO:0005840">
    <property type="term" value="C:ribosome"/>
    <property type="evidence" value="ECO:0007669"/>
    <property type="project" value="UniProtKB-KW"/>
</dbReference>
<dbReference type="GO" id="GO:0019843">
    <property type="term" value="F:rRNA binding"/>
    <property type="evidence" value="ECO:0007669"/>
    <property type="project" value="UniProtKB-UniRule"/>
</dbReference>
<dbReference type="GO" id="GO:0003735">
    <property type="term" value="F:structural constituent of ribosome"/>
    <property type="evidence" value="ECO:0007669"/>
    <property type="project" value="InterPro"/>
</dbReference>
<dbReference type="GO" id="GO:0006412">
    <property type="term" value="P:translation"/>
    <property type="evidence" value="ECO:0007669"/>
    <property type="project" value="UniProtKB-UniRule"/>
</dbReference>
<dbReference type="FunFam" id="3.30.1370.30:FF:000002">
    <property type="entry name" value="30S ribosomal protein S8"/>
    <property type="match status" value="1"/>
</dbReference>
<dbReference type="FunFam" id="3.30.1490.10:FF:000001">
    <property type="entry name" value="30S ribosomal protein S8"/>
    <property type="match status" value="1"/>
</dbReference>
<dbReference type="Gene3D" id="3.30.1370.30">
    <property type="match status" value="1"/>
</dbReference>
<dbReference type="Gene3D" id="3.30.1490.10">
    <property type="match status" value="1"/>
</dbReference>
<dbReference type="HAMAP" id="MF_01302_B">
    <property type="entry name" value="Ribosomal_uS8_B"/>
    <property type="match status" value="1"/>
</dbReference>
<dbReference type="InterPro" id="IPR000630">
    <property type="entry name" value="Ribosomal_uS8"/>
</dbReference>
<dbReference type="InterPro" id="IPR047863">
    <property type="entry name" value="Ribosomal_uS8_CS"/>
</dbReference>
<dbReference type="InterPro" id="IPR035987">
    <property type="entry name" value="Ribosomal_uS8_sf"/>
</dbReference>
<dbReference type="NCBIfam" id="NF001109">
    <property type="entry name" value="PRK00136.1"/>
    <property type="match status" value="1"/>
</dbReference>
<dbReference type="PANTHER" id="PTHR11758">
    <property type="entry name" value="40S RIBOSOMAL PROTEIN S15A"/>
    <property type="match status" value="1"/>
</dbReference>
<dbReference type="Pfam" id="PF00410">
    <property type="entry name" value="Ribosomal_S8"/>
    <property type="match status" value="1"/>
</dbReference>
<dbReference type="SUPFAM" id="SSF56047">
    <property type="entry name" value="Ribosomal protein S8"/>
    <property type="match status" value="1"/>
</dbReference>
<dbReference type="PROSITE" id="PS00053">
    <property type="entry name" value="RIBOSOMAL_S8"/>
    <property type="match status" value="1"/>
</dbReference>
<gene>
    <name evidence="1" type="primary">rpsH</name>
    <name type="ordered locus">CLH_0251</name>
</gene>
<organism>
    <name type="scientific">Clostridium botulinum (strain Alaska E43 / Type E3)</name>
    <dbReference type="NCBI Taxonomy" id="508767"/>
    <lineage>
        <taxon>Bacteria</taxon>
        <taxon>Bacillati</taxon>
        <taxon>Bacillota</taxon>
        <taxon>Clostridia</taxon>
        <taxon>Eubacteriales</taxon>
        <taxon>Clostridiaceae</taxon>
        <taxon>Clostridium</taxon>
    </lineage>
</organism>
<proteinExistence type="inferred from homology"/>
<keyword id="KW-0687">Ribonucleoprotein</keyword>
<keyword id="KW-0689">Ribosomal protein</keyword>
<keyword id="KW-0694">RNA-binding</keyword>
<keyword id="KW-0699">rRNA-binding</keyword>
<accession>B2UYC4</accession>
<sequence length="132" mass="14564">MVMTDPIADLLTRVRNANAVKHEVVEVPSSNVKKAITNILLQEGYIKNIEEYNDGVVPMLRISLKYGANNERVITGIKRISKPGLRVYCKKDEVPKVLNGLGVAVISTSKGLVVDREARKDGLGGEVLCYVW</sequence>
<name>RS8_CLOBA</name>
<reference key="1">
    <citation type="submission" date="2008-05" db="EMBL/GenBank/DDBJ databases">
        <title>Complete genome sequence of Clostridium botulinum E3 str. Alaska E43.</title>
        <authorList>
            <person name="Brinkac L.M."/>
            <person name="Brown J.L."/>
            <person name="Bruce D."/>
            <person name="Detter C."/>
            <person name="Munk C."/>
            <person name="Smith L.A."/>
            <person name="Smith T.J."/>
            <person name="Sutton G."/>
            <person name="Brettin T.S."/>
        </authorList>
    </citation>
    <scope>NUCLEOTIDE SEQUENCE [LARGE SCALE GENOMIC DNA]</scope>
    <source>
        <strain>Alaska E43 / Type E3</strain>
    </source>
</reference>
<feature type="chain" id="PRO_1000140534" description="Small ribosomal subunit protein uS8">
    <location>
        <begin position="1"/>
        <end position="132"/>
    </location>
</feature>
<evidence type="ECO:0000255" key="1">
    <source>
        <dbReference type="HAMAP-Rule" id="MF_01302"/>
    </source>
</evidence>
<evidence type="ECO:0000305" key="2"/>
<comment type="function">
    <text evidence="1">One of the primary rRNA binding proteins, it binds directly to 16S rRNA central domain where it helps coordinate assembly of the platform of the 30S subunit.</text>
</comment>
<comment type="subunit">
    <text evidence="1">Part of the 30S ribosomal subunit. Contacts proteins S5 and S12.</text>
</comment>
<comment type="similarity">
    <text evidence="1">Belongs to the universal ribosomal protein uS8 family.</text>
</comment>